<sequence>MFITSKEMRRIELNSRWLGFEEDFMMENAGAGVARVVIGEYSPNDVLVVCGTGGNGGDGFVTARHLDSEGVDVDVLLVGRREAIKNEAAELNLRRLDRAGIPVQEVRDSEDLESVDFERDVVVDALLGFGIRGRLREPVRSAVLRINEASRAGTRVVSIDIPTGLDPDSGETPDVAVEADLVVSIHRHKRGVRKLRDVFLRRVNAGIPEIAERICGPGDLITSDIWRRDPWSHKGQHGRVLIIGGSRKYVGAPQLAARGALRAGVDLVFLLTVDAVPKNDPNVIYRAVPAERLEPEHLDEVDLEGVDTVVVGPGLGADADSVGILRELAESFDGMIIVDADGLRGISGVNVDDRFVLTPHAGEFRREFGEELGRSLEDRSEAVRRVSEELGCTILLKGRVDVIGSPDGEIRWNVTGTPAMTVGGTGDVLAGVVAGVAARCREGFEAACIGAFVVGSAGCLAERRLSQGLTAEDVAEYVPKVLRNPWAAEPEAVTEVRRD</sequence>
<keyword id="KW-0067">ATP-binding</keyword>
<keyword id="KW-0413">Isomerase</keyword>
<keyword id="KW-0456">Lyase</keyword>
<keyword id="KW-0479">Metal-binding</keyword>
<keyword id="KW-0511">Multifunctional enzyme</keyword>
<keyword id="KW-0520">NAD</keyword>
<keyword id="KW-0521">NADP</keyword>
<keyword id="KW-0547">Nucleotide-binding</keyword>
<keyword id="KW-0630">Potassium</keyword>
<keyword id="KW-1185">Reference proteome</keyword>
<evidence type="ECO:0000250" key="1"/>
<evidence type="ECO:0000305" key="2"/>
<accession>Q8TX67</accession>
<comment type="function">
    <text evidence="1">Bifunctional enzyme that catalyzes the epimerization of the S- and R-forms of NAD(P)HX and the dehydration of the S-form of NAD(P)HX at the expense of ADP, which is converted to AMP. This allows the repair of both epimers of NAD(P)HX, a damaged form of NAD(P)H that is a result of enzymatic or heat-dependent hydration (By similarity).</text>
</comment>
<comment type="catalytic activity">
    <reaction>
        <text>(6S)-NADHX + ADP = AMP + phosphate + NADH + H(+)</text>
        <dbReference type="Rhea" id="RHEA:32223"/>
        <dbReference type="ChEBI" id="CHEBI:15378"/>
        <dbReference type="ChEBI" id="CHEBI:43474"/>
        <dbReference type="ChEBI" id="CHEBI:57945"/>
        <dbReference type="ChEBI" id="CHEBI:64074"/>
        <dbReference type="ChEBI" id="CHEBI:456215"/>
        <dbReference type="ChEBI" id="CHEBI:456216"/>
        <dbReference type="EC" id="4.2.1.136"/>
    </reaction>
</comment>
<comment type="catalytic activity">
    <reaction>
        <text>(6S)-NADPHX + ADP = AMP + phosphate + NADPH + H(+)</text>
        <dbReference type="Rhea" id="RHEA:32235"/>
        <dbReference type="ChEBI" id="CHEBI:15378"/>
        <dbReference type="ChEBI" id="CHEBI:43474"/>
        <dbReference type="ChEBI" id="CHEBI:57783"/>
        <dbReference type="ChEBI" id="CHEBI:64076"/>
        <dbReference type="ChEBI" id="CHEBI:456215"/>
        <dbReference type="ChEBI" id="CHEBI:456216"/>
        <dbReference type="EC" id="4.2.1.136"/>
    </reaction>
</comment>
<comment type="catalytic activity">
    <reaction>
        <text>(6R)-NADHX = (6S)-NADHX</text>
        <dbReference type="Rhea" id="RHEA:32215"/>
        <dbReference type="ChEBI" id="CHEBI:64074"/>
        <dbReference type="ChEBI" id="CHEBI:64075"/>
        <dbReference type="EC" id="5.1.99.6"/>
    </reaction>
</comment>
<comment type="catalytic activity">
    <reaction>
        <text>(6R)-NADPHX = (6S)-NADPHX</text>
        <dbReference type="Rhea" id="RHEA:32227"/>
        <dbReference type="ChEBI" id="CHEBI:64076"/>
        <dbReference type="ChEBI" id="CHEBI:64077"/>
        <dbReference type="EC" id="5.1.99.6"/>
    </reaction>
</comment>
<comment type="cofactor">
    <cofactor evidence="1">
        <name>K(+)</name>
        <dbReference type="ChEBI" id="CHEBI:29103"/>
    </cofactor>
    <text evidence="1">Binds 1 potassium ion per subunit.</text>
</comment>
<comment type="similarity">
    <text evidence="2">In the N-terminal section; belongs to the NnrE/AIBP family.</text>
</comment>
<comment type="similarity">
    <text evidence="2">In the C-terminal section; belongs to the NnrD/CARKD family.</text>
</comment>
<name>NNR_METKA</name>
<dbReference type="EC" id="4.2.1.136"/>
<dbReference type="EC" id="5.1.99.6"/>
<dbReference type="EMBL" id="AE009439">
    <property type="protein sequence ID" value="AAM02022.1"/>
    <property type="molecule type" value="Genomic_DNA"/>
</dbReference>
<dbReference type="RefSeq" id="WP_011019177.1">
    <property type="nucleotide sequence ID" value="NC_003551.1"/>
</dbReference>
<dbReference type="SMR" id="Q8TX67"/>
<dbReference type="FunCoup" id="Q8TX67">
    <property type="interactions" value="3"/>
</dbReference>
<dbReference type="STRING" id="190192.MK0808"/>
<dbReference type="PaxDb" id="190192-MK0808"/>
<dbReference type="EnsemblBacteria" id="AAM02022">
    <property type="protein sequence ID" value="AAM02022"/>
    <property type="gene ID" value="MK0808"/>
</dbReference>
<dbReference type="GeneID" id="1476909"/>
<dbReference type="KEGG" id="mka:MK0808"/>
<dbReference type="PATRIC" id="fig|190192.8.peg.849"/>
<dbReference type="HOGENOM" id="CLU_024853_4_1_2"/>
<dbReference type="InParanoid" id="Q8TX67"/>
<dbReference type="OrthoDB" id="15148at2157"/>
<dbReference type="Proteomes" id="UP000001826">
    <property type="component" value="Chromosome"/>
</dbReference>
<dbReference type="GO" id="GO:0052855">
    <property type="term" value="F:ADP-dependent NAD(P)H-hydrate dehydratase activity"/>
    <property type="evidence" value="ECO:0007669"/>
    <property type="project" value="UniProtKB-UniRule"/>
</dbReference>
<dbReference type="GO" id="GO:0005524">
    <property type="term" value="F:ATP binding"/>
    <property type="evidence" value="ECO:0007669"/>
    <property type="project" value="UniProtKB-KW"/>
</dbReference>
<dbReference type="GO" id="GO:0046872">
    <property type="term" value="F:metal ion binding"/>
    <property type="evidence" value="ECO:0007669"/>
    <property type="project" value="UniProtKB-KW"/>
</dbReference>
<dbReference type="GO" id="GO:0052856">
    <property type="term" value="F:NAD(P)HX epimerase activity"/>
    <property type="evidence" value="ECO:0007669"/>
    <property type="project" value="UniProtKB-UniRule"/>
</dbReference>
<dbReference type="GO" id="GO:0110051">
    <property type="term" value="P:metabolite repair"/>
    <property type="evidence" value="ECO:0007669"/>
    <property type="project" value="TreeGrafter"/>
</dbReference>
<dbReference type="GO" id="GO:0046496">
    <property type="term" value="P:nicotinamide nucleotide metabolic process"/>
    <property type="evidence" value="ECO:0007669"/>
    <property type="project" value="UniProtKB-UniRule"/>
</dbReference>
<dbReference type="CDD" id="cd01171">
    <property type="entry name" value="YXKO-related"/>
    <property type="match status" value="1"/>
</dbReference>
<dbReference type="Gene3D" id="3.40.1190.20">
    <property type="match status" value="1"/>
</dbReference>
<dbReference type="Gene3D" id="3.40.50.10260">
    <property type="entry name" value="YjeF N-terminal domain"/>
    <property type="match status" value="1"/>
</dbReference>
<dbReference type="HAMAP" id="MF_01965">
    <property type="entry name" value="NADHX_dehydratase"/>
    <property type="match status" value="1"/>
</dbReference>
<dbReference type="HAMAP" id="MF_01966">
    <property type="entry name" value="NADHX_epimerase"/>
    <property type="match status" value="1"/>
</dbReference>
<dbReference type="InterPro" id="IPR017953">
    <property type="entry name" value="Carbohydrate_kinase_pred_CS"/>
</dbReference>
<dbReference type="InterPro" id="IPR000631">
    <property type="entry name" value="CARKD"/>
</dbReference>
<dbReference type="InterPro" id="IPR030677">
    <property type="entry name" value="Nnr"/>
</dbReference>
<dbReference type="InterPro" id="IPR029056">
    <property type="entry name" value="Ribokinase-like"/>
</dbReference>
<dbReference type="InterPro" id="IPR004443">
    <property type="entry name" value="YjeF_N_dom"/>
</dbReference>
<dbReference type="InterPro" id="IPR036652">
    <property type="entry name" value="YjeF_N_dom_sf"/>
</dbReference>
<dbReference type="NCBIfam" id="TIGR00196">
    <property type="entry name" value="yjeF_cterm"/>
    <property type="match status" value="1"/>
</dbReference>
<dbReference type="NCBIfam" id="TIGR00197">
    <property type="entry name" value="yjeF_nterm"/>
    <property type="match status" value="1"/>
</dbReference>
<dbReference type="PANTHER" id="PTHR12592:SF0">
    <property type="entry name" value="ATP-DEPENDENT (S)-NAD(P)H-HYDRATE DEHYDRATASE"/>
    <property type="match status" value="1"/>
</dbReference>
<dbReference type="PANTHER" id="PTHR12592">
    <property type="entry name" value="ATP-DEPENDENT (S)-NAD(P)H-HYDRATE DEHYDRATASE FAMILY MEMBER"/>
    <property type="match status" value="1"/>
</dbReference>
<dbReference type="Pfam" id="PF01256">
    <property type="entry name" value="Carb_kinase"/>
    <property type="match status" value="1"/>
</dbReference>
<dbReference type="Pfam" id="PF03853">
    <property type="entry name" value="YjeF_N"/>
    <property type="match status" value="1"/>
</dbReference>
<dbReference type="PIRSF" id="PIRSF017184">
    <property type="entry name" value="Nnr"/>
    <property type="match status" value="1"/>
</dbReference>
<dbReference type="SUPFAM" id="SSF53613">
    <property type="entry name" value="Ribokinase-like"/>
    <property type="match status" value="1"/>
</dbReference>
<dbReference type="SUPFAM" id="SSF64153">
    <property type="entry name" value="YjeF N-terminal domain-like"/>
    <property type="match status" value="1"/>
</dbReference>
<dbReference type="PROSITE" id="PS01050">
    <property type="entry name" value="YJEF_C_2"/>
    <property type="match status" value="1"/>
</dbReference>
<dbReference type="PROSITE" id="PS51383">
    <property type="entry name" value="YJEF_C_3"/>
    <property type="match status" value="1"/>
</dbReference>
<dbReference type="PROSITE" id="PS51385">
    <property type="entry name" value="YJEF_N"/>
    <property type="match status" value="1"/>
</dbReference>
<protein>
    <recommendedName>
        <fullName>Bifunctional NAD(P)H-hydrate repair enzyme Nnr</fullName>
    </recommendedName>
    <alternativeName>
        <fullName>Nicotinamide nucleotide repair protein</fullName>
    </alternativeName>
    <domain>
        <recommendedName>
            <fullName>ADP-dependent (S)-NAD(P)H-hydrate dehydratase</fullName>
            <ecNumber>4.2.1.136</ecNumber>
        </recommendedName>
        <alternativeName>
            <fullName>ADP-dependent NAD(P)HX dehydratase</fullName>
        </alternativeName>
    </domain>
    <domain>
        <recommendedName>
            <fullName>NAD(P)H-hydrate epimerase</fullName>
            <ecNumber>5.1.99.6</ecNumber>
        </recommendedName>
        <alternativeName>
            <fullName>NAD(P)HX epimerase</fullName>
        </alternativeName>
    </domain>
</protein>
<organism>
    <name type="scientific">Methanopyrus kandleri (strain AV19 / DSM 6324 / JCM 9639 / NBRC 100938)</name>
    <dbReference type="NCBI Taxonomy" id="190192"/>
    <lineage>
        <taxon>Archaea</taxon>
        <taxon>Methanobacteriati</taxon>
        <taxon>Methanobacteriota</taxon>
        <taxon>Methanomada group</taxon>
        <taxon>Methanopyri</taxon>
        <taxon>Methanopyrales</taxon>
        <taxon>Methanopyraceae</taxon>
        <taxon>Methanopyrus</taxon>
    </lineage>
</organism>
<gene>
    <name type="primary">nnr</name>
    <name type="ordered locus">MK0808</name>
</gene>
<feature type="chain" id="PRO_0000416429" description="Bifunctional NAD(P)H-hydrate repair enzyme Nnr">
    <location>
        <begin position="1"/>
        <end position="499"/>
    </location>
</feature>
<feature type="domain" description="YjeF N-terminal">
    <location>
        <begin position="8"/>
        <end position="213"/>
    </location>
</feature>
<feature type="domain" description="YjeF C-terminal">
    <location>
        <begin position="217"/>
        <end position="485"/>
    </location>
</feature>
<feature type="region of interest" description="NAD(P)H-hydrate epimerase" evidence="1">
    <location>
        <begin position="1"/>
        <end position="217"/>
    </location>
</feature>
<feature type="region of interest" description="NADPHX 1; for epimerase activity" evidence="1">
    <location>
        <begin position="54"/>
        <end position="58"/>
    </location>
</feature>
<feature type="region of interest" description="NADPHX 1; for epimerase activity" evidence="1">
    <location>
        <begin position="128"/>
        <end position="134"/>
    </location>
</feature>
<feature type="region of interest" description="ADP-dependent (S)-NAD(P)H-hydrate dehydratase" evidence="1">
    <location>
        <begin position="217"/>
        <end position="499"/>
    </location>
</feature>
<feature type="region of interest" description="NADPHX 2; for dehydratase activity" evidence="1">
    <location>
        <begin position="360"/>
        <end position="366"/>
    </location>
</feature>
<feature type="binding site" evidence="1">
    <location>
        <position position="55"/>
    </location>
    <ligand>
        <name>K(+)</name>
        <dbReference type="ChEBI" id="CHEBI:29103"/>
    </ligand>
</feature>
<feature type="binding site" evidence="1">
    <location>
        <position position="124"/>
    </location>
    <ligand>
        <name>K(+)</name>
        <dbReference type="ChEBI" id="CHEBI:29103"/>
    </ligand>
</feature>
<feature type="binding site" evidence="1">
    <location>
        <position position="160"/>
    </location>
    <ligand>
        <name>(6S)-NADPHX</name>
        <dbReference type="ChEBI" id="CHEBI:64076"/>
        <label>1</label>
        <note>for epimerase activity</note>
    </ligand>
</feature>
<feature type="binding site" evidence="1">
    <location>
        <position position="163"/>
    </location>
    <ligand>
        <name>K(+)</name>
        <dbReference type="ChEBI" id="CHEBI:29103"/>
    </ligand>
</feature>
<feature type="binding site" evidence="1">
    <location>
        <position position="314"/>
    </location>
    <ligand>
        <name>(6S)-NADPHX</name>
        <dbReference type="ChEBI" id="CHEBI:64076"/>
        <label>2</label>
        <note>for dehydratase activity</note>
    </ligand>
</feature>
<feature type="binding site" evidence="1">
    <location>
        <begin position="397"/>
        <end position="401"/>
    </location>
    <ligand>
        <name>ADP</name>
        <dbReference type="ChEBI" id="CHEBI:456216"/>
    </ligand>
</feature>
<feature type="binding site" evidence="1">
    <location>
        <begin position="417"/>
        <end position="426"/>
    </location>
    <ligand>
        <name>ADP</name>
        <dbReference type="ChEBI" id="CHEBI:456216"/>
    </ligand>
</feature>
<feature type="binding site" evidence="1">
    <location>
        <position position="427"/>
    </location>
    <ligand>
        <name>(6S)-NADPHX</name>
        <dbReference type="ChEBI" id="CHEBI:64076"/>
        <label>2</label>
        <note>for dehydratase activity</note>
    </ligand>
</feature>
<reference key="1">
    <citation type="journal article" date="2002" name="Proc. Natl. Acad. Sci. U.S.A.">
        <title>The complete genome of hyperthermophile Methanopyrus kandleri AV19 and monophyly of archaeal methanogens.</title>
        <authorList>
            <person name="Slesarev A.I."/>
            <person name="Mezhevaya K.V."/>
            <person name="Makarova K.S."/>
            <person name="Polushin N.N."/>
            <person name="Shcherbinina O.V."/>
            <person name="Shakhova V.V."/>
            <person name="Belova G.I."/>
            <person name="Aravind L."/>
            <person name="Natale D.A."/>
            <person name="Rogozin I.B."/>
            <person name="Tatusov R.L."/>
            <person name="Wolf Y.I."/>
            <person name="Stetter K.O."/>
            <person name="Malykh A.G."/>
            <person name="Koonin E.V."/>
            <person name="Kozyavkin S.A."/>
        </authorList>
    </citation>
    <scope>NUCLEOTIDE SEQUENCE [LARGE SCALE GENOMIC DNA]</scope>
    <source>
        <strain>AV19 / DSM 6324 / JCM 9639 / NBRC 100938</strain>
    </source>
</reference>
<proteinExistence type="inferred from homology"/>